<proteinExistence type="predicted"/>
<protein>
    <recommendedName>
        <fullName>Uncharacterized protein HI_0931</fullName>
    </recommendedName>
</protein>
<accession>P44078</accession>
<sequence length="161" mass="18798">MKSHRTLYKSAVFLYLIFKGKRMLHLTLEDELFLGTPKQVGTHSTVFEHFAVMFEDDGETGYFYALDMRQNAQPIVDMLHVYNVDSTSNHHEARKLEICWDESGYVALLLINGYPHAVFDFARLVGYNSNKYPQPDLMSMWTREEITNKQAEQWLGVKTIR</sequence>
<dbReference type="EMBL" id="L42023">
    <property type="protein sequence ID" value="AAC22601.1"/>
    <property type="molecule type" value="Genomic_DNA"/>
</dbReference>
<dbReference type="PIR" id="F64016">
    <property type="entry name" value="F64016"/>
</dbReference>
<dbReference type="RefSeq" id="NP_439091.2">
    <property type="nucleotide sequence ID" value="NC_000907.1"/>
</dbReference>
<dbReference type="STRING" id="71421.HI_0931"/>
<dbReference type="EnsemblBacteria" id="AAC22601">
    <property type="protein sequence ID" value="AAC22601"/>
    <property type="gene ID" value="HI_0931"/>
</dbReference>
<dbReference type="KEGG" id="hin:HI_0931"/>
<dbReference type="PATRIC" id="fig|71421.8.peg.972"/>
<dbReference type="eggNOG" id="COG4316">
    <property type="taxonomic scope" value="Bacteria"/>
</dbReference>
<dbReference type="HOGENOM" id="CLU_151222_0_0_6"/>
<dbReference type="OrthoDB" id="5679620at2"/>
<dbReference type="Proteomes" id="UP000000579">
    <property type="component" value="Chromosome"/>
</dbReference>
<dbReference type="InterPro" id="IPR014449">
    <property type="entry name" value="UCP007050_HI0931"/>
</dbReference>
<dbReference type="Pfam" id="PF10008">
    <property type="entry name" value="DUF2251"/>
    <property type="match status" value="1"/>
</dbReference>
<dbReference type="PIRSF" id="PIRSF007050">
    <property type="entry name" value="UPC007050"/>
    <property type="match status" value="1"/>
</dbReference>
<organism>
    <name type="scientific">Haemophilus influenzae (strain ATCC 51907 / DSM 11121 / KW20 / Rd)</name>
    <dbReference type="NCBI Taxonomy" id="71421"/>
    <lineage>
        <taxon>Bacteria</taxon>
        <taxon>Pseudomonadati</taxon>
        <taxon>Pseudomonadota</taxon>
        <taxon>Gammaproteobacteria</taxon>
        <taxon>Pasteurellales</taxon>
        <taxon>Pasteurellaceae</taxon>
        <taxon>Haemophilus</taxon>
    </lineage>
</organism>
<feature type="chain" id="PRO_0000077977" description="Uncharacterized protein HI_0931">
    <location>
        <begin position="1"/>
        <end position="161"/>
    </location>
</feature>
<name>Y931_HAEIN</name>
<keyword id="KW-1185">Reference proteome</keyword>
<gene>
    <name type="ordered locus">HI_0931</name>
</gene>
<reference key="1">
    <citation type="journal article" date="1995" name="Science">
        <title>Whole-genome random sequencing and assembly of Haemophilus influenzae Rd.</title>
        <authorList>
            <person name="Fleischmann R.D."/>
            <person name="Adams M.D."/>
            <person name="White O."/>
            <person name="Clayton R.A."/>
            <person name="Kirkness E.F."/>
            <person name="Kerlavage A.R."/>
            <person name="Bult C.J."/>
            <person name="Tomb J.-F."/>
            <person name="Dougherty B.A."/>
            <person name="Merrick J.M."/>
            <person name="McKenney K."/>
            <person name="Sutton G.G."/>
            <person name="FitzHugh W."/>
            <person name="Fields C.A."/>
            <person name="Gocayne J.D."/>
            <person name="Scott J.D."/>
            <person name="Shirley R."/>
            <person name="Liu L.-I."/>
            <person name="Glodek A."/>
            <person name="Kelley J.M."/>
            <person name="Weidman J.F."/>
            <person name="Phillips C.A."/>
            <person name="Spriggs T."/>
            <person name="Hedblom E."/>
            <person name="Cotton M.D."/>
            <person name="Utterback T.R."/>
            <person name="Hanna M.C."/>
            <person name="Nguyen D.T."/>
            <person name="Saudek D.M."/>
            <person name="Brandon R.C."/>
            <person name="Fine L.D."/>
            <person name="Fritchman J.L."/>
            <person name="Fuhrmann J.L."/>
            <person name="Geoghagen N.S.M."/>
            <person name="Gnehm C.L."/>
            <person name="McDonald L.A."/>
            <person name="Small K.V."/>
            <person name="Fraser C.M."/>
            <person name="Smith H.O."/>
            <person name="Venter J.C."/>
        </authorList>
    </citation>
    <scope>NUCLEOTIDE SEQUENCE [LARGE SCALE GENOMIC DNA]</scope>
    <source>
        <strain>ATCC 51907 / DSM 11121 / KW20 / Rd</strain>
    </source>
</reference>